<dbReference type="EC" id="2.7.1.16" evidence="1"/>
<dbReference type="EMBL" id="AP008934">
    <property type="protein sequence ID" value="BAE19323.1"/>
    <property type="molecule type" value="Genomic_DNA"/>
</dbReference>
<dbReference type="RefSeq" id="WP_011303809.1">
    <property type="nucleotide sequence ID" value="NZ_MTGA01000039.1"/>
</dbReference>
<dbReference type="SMR" id="Q49V87"/>
<dbReference type="GeneID" id="3616424"/>
<dbReference type="KEGG" id="ssp:SSP2178"/>
<dbReference type="PATRIC" id="fig|342451.11.peg.2169"/>
<dbReference type="eggNOG" id="COG1069">
    <property type="taxonomic scope" value="Bacteria"/>
</dbReference>
<dbReference type="HOGENOM" id="CLU_009281_9_1_9"/>
<dbReference type="OrthoDB" id="9805576at2"/>
<dbReference type="UniPathway" id="UPA00145">
    <property type="reaction ID" value="UER00566"/>
</dbReference>
<dbReference type="Proteomes" id="UP000006371">
    <property type="component" value="Chromosome"/>
</dbReference>
<dbReference type="GO" id="GO:0005737">
    <property type="term" value="C:cytoplasm"/>
    <property type="evidence" value="ECO:0007669"/>
    <property type="project" value="TreeGrafter"/>
</dbReference>
<dbReference type="GO" id="GO:0005524">
    <property type="term" value="F:ATP binding"/>
    <property type="evidence" value="ECO:0007669"/>
    <property type="project" value="UniProtKB-KW"/>
</dbReference>
<dbReference type="GO" id="GO:0019150">
    <property type="term" value="F:D-ribulokinase activity"/>
    <property type="evidence" value="ECO:0007669"/>
    <property type="project" value="RHEA"/>
</dbReference>
<dbReference type="GO" id="GO:0008741">
    <property type="term" value="F:ribulokinase activity"/>
    <property type="evidence" value="ECO:0007669"/>
    <property type="project" value="UniProtKB-UniRule"/>
</dbReference>
<dbReference type="GO" id="GO:0019569">
    <property type="term" value="P:L-arabinose catabolic process to xylulose 5-phosphate"/>
    <property type="evidence" value="ECO:0007669"/>
    <property type="project" value="UniProtKB-UniRule"/>
</dbReference>
<dbReference type="CDD" id="cd07781">
    <property type="entry name" value="ASKHA_NBD_FGGY_L-RBK"/>
    <property type="match status" value="1"/>
</dbReference>
<dbReference type="Gene3D" id="1.20.58.2240">
    <property type="match status" value="1"/>
</dbReference>
<dbReference type="Gene3D" id="3.30.420.40">
    <property type="match status" value="1"/>
</dbReference>
<dbReference type="HAMAP" id="MF_00520">
    <property type="entry name" value="Ribulokinase"/>
    <property type="match status" value="1"/>
</dbReference>
<dbReference type="InterPro" id="IPR043129">
    <property type="entry name" value="ATPase_NBD"/>
</dbReference>
<dbReference type="InterPro" id="IPR000577">
    <property type="entry name" value="Carb_kinase_FGGY"/>
</dbReference>
<dbReference type="InterPro" id="IPR018485">
    <property type="entry name" value="FGGY_C"/>
</dbReference>
<dbReference type="InterPro" id="IPR018484">
    <property type="entry name" value="FGGY_N"/>
</dbReference>
<dbReference type="InterPro" id="IPR005929">
    <property type="entry name" value="Ribulokinase"/>
</dbReference>
<dbReference type="NCBIfam" id="NF003154">
    <property type="entry name" value="PRK04123.1"/>
    <property type="match status" value="1"/>
</dbReference>
<dbReference type="PANTHER" id="PTHR43435:SF4">
    <property type="entry name" value="FGGY CARBOHYDRATE KINASE DOMAIN-CONTAINING PROTEIN"/>
    <property type="match status" value="1"/>
</dbReference>
<dbReference type="PANTHER" id="PTHR43435">
    <property type="entry name" value="RIBULOKINASE"/>
    <property type="match status" value="1"/>
</dbReference>
<dbReference type="Pfam" id="PF02782">
    <property type="entry name" value="FGGY_C"/>
    <property type="match status" value="1"/>
</dbReference>
<dbReference type="Pfam" id="PF00370">
    <property type="entry name" value="FGGY_N"/>
    <property type="match status" value="1"/>
</dbReference>
<dbReference type="PIRSF" id="PIRSF000538">
    <property type="entry name" value="GlpK"/>
    <property type="match status" value="1"/>
</dbReference>
<dbReference type="SUPFAM" id="SSF53067">
    <property type="entry name" value="Actin-like ATPase domain"/>
    <property type="match status" value="2"/>
</dbReference>
<evidence type="ECO:0000255" key="1">
    <source>
        <dbReference type="HAMAP-Rule" id="MF_00520"/>
    </source>
</evidence>
<sequence>MTYSIGIDFGTGSGRVFLVNTENGEIIGQYVQTYAHGTIEGELNGHKLPQSYALQNANDYMEVIETGIPEILAKTNIDAKDIVGIGIDFTSSTVIFVDDQMEPMHNNPKFYNNPHAYVKLWKHHGAQAEADLLFNTAIEEKNRWLGYYGFNVSSEWMIPKIMEVNDKAPEVMTETADIMEAGDWIVNRLTGENVRSNCGLGFKSFWESSTGFHYDLFDKVDDNLSDIVRTKVEAPIVSIGESVGTVSAEMAHKLGLSPETVVSPFIIDAHSSLLGIGAEKDKEMTMVMGTSTCHLMLNKEQHKVPGISGSVKGAIIPDLYAYEAGQTAVGDLFEYVANQSPYEYVKTAEDRGISIFELLNEKASQRYPGESGLIALDWHNGNRSVLSDSNLKGSLFGLSLQTKHEDIYRAYMEATAFGTKMIMQQYQGWQMEVERVFACGGIPKKNHLLMEIYANVLNKKITVIDSEYAPAIGAAILGAICGGAHPNFSSAIQAMKEPVLYQVEPDHAQVLIYKKLFNAYKELHDLLGYKKARIMRNVSALM</sequence>
<protein>
    <recommendedName>
        <fullName evidence="1">Ribulokinase 2</fullName>
        <ecNumber evidence="1">2.7.1.16</ecNumber>
    </recommendedName>
</protein>
<comment type="catalytic activity">
    <reaction evidence="1">
        <text>D-ribulose + ATP = D-ribulose 5-phosphate + ADP + H(+)</text>
        <dbReference type="Rhea" id="RHEA:17601"/>
        <dbReference type="ChEBI" id="CHEBI:15378"/>
        <dbReference type="ChEBI" id="CHEBI:17173"/>
        <dbReference type="ChEBI" id="CHEBI:30616"/>
        <dbReference type="ChEBI" id="CHEBI:58121"/>
        <dbReference type="ChEBI" id="CHEBI:456216"/>
        <dbReference type="EC" id="2.7.1.16"/>
    </reaction>
</comment>
<comment type="catalytic activity">
    <reaction evidence="1">
        <text>L-ribulose + ATP = L-ribulose 5-phosphate + ADP + H(+)</text>
        <dbReference type="Rhea" id="RHEA:22072"/>
        <dbReference type="ChEBI" id="CHEBI:15378"/>
        <dbReference type="ChEBI" id="CHEBI:16880"/>
        <dbReference type="ChEBI" id="CHEBI:30616"/>
        <dbReference type="ChEBI" id="CHEBI:58226"/>
        <dbReference type="ChEBI" id="CHEBI:456216"/>
        <dbReference type="EC" id="2.7.1.16"/>
    </reaction>
</comment>
<comment type="pathway">
    <text evidence="1">Carbohydrate degradation; L-arabinose degradation via L-ribulose; D-xylulose 5-phosphate from L-arabinose (bacterial route): step 2/3.</text>
</comment>
<comment type="similarity">
    <text evidence="1">Belongs to the ribulokinase family.</text>
</comment>
<reference key="1">
    <citation type="journal article" date="2005" name="Proc. Natl. Acad. Sci. U.S.A.">
        <title>Whole genome sequence of Staphylococcus saprophyticus reveals the pathogenesis of uncomplicated urinary tract infection.</title>
        <authorList>
            <person name="Kuroda M."/>
            <person name="Yamashita A."/>
            <person name="Hirakawa H."/>
            <person name="Kumano M."/>
            <person name="Morikawa K."/>
            <person name="Higashide M."/>
            <person name="Maruyama A."/>
            <person name="Inose Y."/>
            <person name="Matoba K."/>
            <person name="Toh H."/>
            <person name="Kuhara S."/>
            <person name="Hattori M."/>
            <person name="Ohta T."/>
        </authorList>
    </citation>
    <scope>NUCLEOTIDE SEQUENCE [LARGE SCALE GENOMIC DNA]</scope>
    <source>
        <strain>ATCC 15305 / DSM 20229 / NCIMB 8711 / NCTC 7292 / S-41</strain>
    </source>
</reference>
<organism>
    <name type="scientific">Staphylococcus saprophyticus subsp. saprophyticus (strain ATCC 15305 / DSM 20229 / NCIMB 8711 / NCTC 7292 / S-41)</name>
    <dbReference type="NCBI Taxonomy" id="342451"/>
    <lineage>
        <taxon>Bacteria</taxon>
        <taxon>Bacillati</taxon>
        <taxon>Bacillota</taxon>
        <taxon>Bacilli</taxon>
        <taxon>Bacillales</taxon>
        <taxon>Staphylococcaceae</taxon>
        <taxon>Staphylococcus</taxon>
    </lineage>
</organism>
<feature type="chain" id="PRO_0000198375" description="Ribulokinase 2">
    <location>
        <begin position="1"/>
        <end position="542"/>
    </location>
</feature>
<keyword id="KW-0054">Arabinose catabolism</keyword>
<keyword id="KW-0067">ATP-binding</keyword>
<keyword id="KW-0119">Carbohydrate metabolism</keyword>
<keyword id="KW-0418">Kinase</keyword>
<keyword id="KW-0547">Nucleotide-binding</keyword>
<keyword id="KW-1185">Reference proteome</keyword>
<keyword id="KW-0808">Transferase</keyword>
<proteinExistence type="inferred from homology"/>
<gene>
    <name evidence="1" type="primary">araB2</name>
    <name type="ordered locus">SSP2178</name>
</gene>
<name>ARAB2_STAS1</name>
<accession>Q49V87</accession>